<organism>
    <name type="scientific">Arabidopsis thaliana</name>
    <name type="common">Mouse-ear cress</name>
    <dbReference type="NCBI Taxonomy" id="3702"/>
    <lineage>
        <taxon>Eukaryota</taxon>
        <taxon>Viridiplantae</taxon>
        <taxon>Streptophyta</taxon>
        <taxon>Embryophyta</taxon>
        <taxon>Tracheophyta</taxon>
        <taxon>Spermatophyta</taxon>
        <taxon>Magnoliopsida</taxon>
        <taxon>eudicotyledons</taxon>
        <taxon>Gunneridae</taxon>
        <taxon>Pentapetalae</taxon>
        <taxon>rosids</taxon>
        <taxon>malvids</taxon>
        <taxon>Brassicales</taxon>
        <taxon>Brassicaceae</taxon>
        <taxon>Camelineae</taxon>
        <taxon>Arabidopsis</taxon>
    </lineage>
</organism>
<dbReference type="EC" id="2.7.7.6"/>
<dbReference type="EMBL" id="Y08137">
    <property type="protein sequence ID" value="CAA69331.1"/>
    <property type="molecule type" value="mRNA"/>
</dbReference>
<dbReference type="EMBL" id="Y09006">
    <property type="protein sequence ID" value="CAA70210.1"/>
    <property type="molecule type" value="Genomic_DNA"/>
</dbReference>
<dbReference type="EMBL" id="Y09432">
    <property type="protein sequence ID" value="CAA70583.1"/>
    <property type="molecule type" value="Genomic_DNA"/>
</dbReference>
<dbReference type="EMBL" id="AC011665">
    <property type="protein sequence ID" value="AAG51592.1"/>
    <property type="molecule type" value="Genomic_DNA"/>
</dbReference>
<dbReference type="EMBL" id="CP002684">
    <property type="protein sequence ID" value="AEE34873.1"/>
    <property type="molecule type" value="Genomic_DNA"/>
</dbReference>
<dbReference type="PIR" id="D96714">
    <property type="entry name" value="D96714"/>
</dbReference>
<dbReference type="RefSeq" id="NP_177063.1">
    <molecule id="P92969-1"/>
    <property type="nucleotide sequence ID" value="NM_105571.4"/>
</dbReference>
<dbReference type="SMR" id="P92969"/>
<dbReference type="FunCoup" id="P92969">
    <property type="interactions" value="2607"/>
</dbReference>
<dbReference type="STRING" id="3702.P92969"/>
<dbReference type="PaxDb" id="3702-AT1G68990.2"/>
<dbReference type="ProteomicsDB" id="228233">
    <molecule id="P92969-1"/>
</dbReference>
<dbReference type="EnsemblPlants" id="AT1G68990.1">
    <molecule id="P92969-1"/>
    <property type="protein sequence ID" value="AT1G68990.1"/>
    <property type="gene ID" value="AT1G68990"/>
</dbReference>
<dbReference type="GeneID" id="843232"/>
<dbReference type="Gramene" id="AT1G68990.1">
    <molecule id="P92969-1"/>
    <property type="protein sequence ID" value="AT1G68990.1"/>
    <property type="gene ID" value="AT1G68990"/>
</dbReference>
<dbReference type="KEGG" id="ath:AT1G68990"/>
<dbReference type="Araport" id="AT1G68990"/>
<dbReference type="TAIR" id="AT1G68990">
    <property type="gene designation" value="MGP3"/>
</dbReference>
<dbReference type="eggNOG" id="KOG1038">
    <property type="taxonomic scope" value="Eukaryota"/>
</dbReference>
<dbReference type="HOGENOM" id="CLU_003364_4_0_1"/>
<dbReference type="InParanoid" id="P92969"/>
<dbReference type="OMA" id="FIMRTHG"/>
<dbReference type="OrthoDB" id="276422at2759"/>
<dbReference type="PhylomeDB" id="P92969"/>
<dbReference type="PRO" id="PR:P92969"/>
<dbReference type="Proteomes" id="UP000006548">
    <property type="component" value="Chromosome 1"/>
</dbReference>
<dbReference type="ExpressionAtlas" id="P92969">
    <property type="expression patterns" value="baseline and differential"/>
</dbReference>
<dbReference type="GO" id="GO:0000428">
    <property type="term" value="C:DNA-directed RNA polymerase complex"/>
    <property type="evidence" value="ECO:0007669"/>
    <property type="project" value="UniProtKB-KW"/>
</dbReference>
<dbReference type="GO" id="GO:0005739">
    <property type="term" value="C:mitochondrion"/>
    <property type="evidence" value="ECO:0007669"/>
    <property type="project" value="UniProtKB-SubCell"/>
</dbReference>
<dbReference type="GO" id="GO:0009536">
    <property type="term" value="C:plastid"/>
    <property type="evidence" value="ECO:0007669"/>
    <property type="project" value="GOC"/>
</dbReference>
<dbReference type="GO" id="GO:0003677">
    <property type="term" value="F:DNA binding"/>
    <property type="evidence" value="ECO:0007669"/>
    <property type="project" value="InterPro"/>
</dbReference>
<dbReference type="GO" id="GO:0003899">
    <property type="term" value="F:DNA-directed RNA polymerase activity"/>
    <property type="evidence" value="ECO:0007669"/>
    <property type="project" value="UniProtKB-EC"/>
</dbReference>
<dbReference type="GO" id="GO:0006351">
    <property type="term" value="P:DNA-templated transcription"/>
    <property type="evidence" value="ECO:0007669"/>
    <property type="project" value="InterPro"/>
</dbReference>
<dbReference type="FunFam" id="1.10.1320.10:FF:000001">
    <property type="entry name" value="DNA-directed RNA polymerase"/>
    <property type="match status" value="1"/>
</dbReference>
<dbReference type="FunFam" id="1.10.150.20:FF:000027">
    <property type="entry name" value="DNA-directed RNA polymerase"/>
    <property type="match status" value="1"/>
</dbReference>
<dbReference type="FunFam" id="1.10.287.260:FF:000001">
    <property type="entry name" value="DNA-directed RNA polymerase"/>
    <property type="match status" value="1"/>
</dbReference>
<dbReference type="FunFam" id="1.10.287.280:FF:000001">
    <property type="entry name" value="DNA-directed RNA polymerase"/>
    <property type="match status" value="1"/>
</dbReference>
<dbReference type="Gene3D" id="1.10.287.260">
    <property type="match status" value="1"/>
</dbReference>
<dbReference type="Gene3D" id="1.10.287.280">
    <property type="match status" value="1"/>
</dbReference>
<dbReference type="Gene3D" id="1.10.150.20">
    <property type="entry name" value="5' to 3' exonuclease, C-terminal subdomain"/>
    <property type="match status" value="1"/>
</dbReference>
<dbReference type="Gene3D" id="1.10.1320.10">
    <property type="entry name" value="DNA-directed RNA polymerase, N-terminal domain"/>
    <property type="match status" value="1"/>
</dbReference>
<dbReference type="InterPro" id="IPR024075">
    <property type="entry name" value="DNA-dir_RNA_pol_helix_hairp_sf"/>
</dbReference>
<dbReference type="InterPro" id="IPR046950">
    <property type="entry name" value="DNA-dir_Rpol_C_phage-type"/>
</dbReference>
<dbReference type="InterPro" id="IPR002092">
    <property type="entry name" value="DNA-dir_Rpol_phage-type"/>
</dbReference>
<dbReference type="InterPro" id="IPR043502">
    <property type="entry name" value="DNA/RNA_pol_sf"/>
</dbReference>
<dbReference type="InterPro" id="IPR037159">
    <property type="entry name" value="RNA_POL_N_sf"/>
</dbReference>
<dbReference type="InterPro" id="IPR029262">
    <property type="entry name" value="RPOL_N"/>
</dbReference>
<dbReference type="PANTHER" id="PTHR10102:SF25">
    <property type="entry name" value="DNA-DIRECTED RNA POLYMERASE 1, MITOCHONDRIAL"/>
    <property type="match status" value="1"/>
</dbReference>
<dbReference type="PANTHER" id="PTHR10102">
    <property type="entry name" value="DNA-DIRECTED RNA POLYMERASE, MITOCHONDRIAL"/>
    <property type="match status" value="1"/>
</dbReference>
<dbReference type="Pfam" id="PF00940">
    <property type="entry name" value="RNA_pol"/>
    <property type="match status" value="1"/>
</dbReference>
<dbReference type="Pfam" id="PF14700">
    <property type="entry name" value="RPOL_N"/>
    <property type="match status" value="1"/>
</dbReference>
<dbReference type="SMART" id="SM01311">
    <property type="entry name" value="RPOL_N"/>
    <property type="match status" value="1"/>
</dbReference>
<dbReference type="SUPFAM" id="SSF56672">
    <property type="entry name" value="DNA/RNA polymerases"/>
    <property type="match status" value="1"/>
</dbReference>
<dbReference type="PROSITE" id="PS00900">
    <property type="entry name" value="RNA_POL_PHAGE_1"/>
    <property type="match status" value="1"/>
</dbReference>
<dbReference type="PROSITE" id="PS00489">
    <property type="entry name" value="RNA_POL_PHAGE_2"/>
    <property type="match status" value="1"/>
</dbReference>
<sequence length="976" mass="110930">MWRNILGRASLRKVKFLSDSSSSGTHYPVNRVRGILSSVNLSGVRNGLSINPVNEMGGLSSFRHGQCYVFEGYATAAQAIDSTDPEDESSGSDEVNELITEMEKETERIRKKARLAAIPPKRVIAGMGAQKFYMLKQRQVKMETEEWERAARECREILADMCEQKLAPNLPYMKSLFLGWFEPVRNAIQDDLDTFKIKKGKIPYAPFMEQLPADKMAVITMHKMMGLLMTNAEGVGIVKLVNAATQIGEAVEQEVRINSFLQKKNKKNATDKTINTEAENVSEEIVAKETEKARKQVTVLMEKNKLRQVKALVRKHDSFKPWGQEAQVKVGARLIQLLMENAYIQPPAEQFDDGPPDIRPAFKQNFRTVTLENTKTSRRYGCIECDPLVLKGLDKSARHMVIPYLPMLIPPQNWTGYDQGAHFFLPSYVMRTHGAKQQRTVMKRTPKEQLEPVYEALDTLGNTKWKINKKVLSLVDRIWANGGRIGGLVDREDVPIPEEPEREDQEKFKNWRWESKKAIKQNNERHSQRCDIELKLEVARKMKDEEGFYYPHNVDFRGRAYPIHPYLNHLGSDLCRGILEFCEGKPLGKSGLRWLKIHIANLYAGGVDKLAYEDRIAFTESHLEDIFDSSDRPLEGKRWWLNAEDPFQCLAACINLSEALRSPFPEAAISHIPIHQDGSCNGLQHYAALGRDKLGADAVNLVTGEKPADVYTEIAARVLKIMQQDAEEDPETFPNATYAKLMLDQVDRKLVKQTVMTSVYGVTYSGARDQIKKRLKERGTFEDDSLTFHASCYAAKITLKALEEMFEAARAIKSWFGDCAKIIASENNAVCWTTPLGLPVVQPYRKPGRHLVKTTLQVLTLSRETDKVMARRQMTAFAPNFIHSLDGSHMMMTAVACNRAGLSFAGVHDSFWTHACDVDVMNTILREKFVELYEKPILENLLESFQKSFPDISFPPLPERGDFDLRKVLESTYFFN</sequence>
<keyword id="KW-0025">Alternative splicing</keyword>
<keyword id="KW-0240">DNA-directed RNA polymerase</keyword>
<keyword id="KW-0496">Mitochondrion</keyword>
<keyword id="KW-0548">Nucleotidyltransferase</keyword>
<keyword id="KW-1185">Reference proteome</keyword>
<keyword id="KW-0804">Transcription</keyword>
<keyword id="KW-0808">Transferase</keyword>
<keyword id="KW-0809">Transit peptide</keyword>
<name>RPOT1_ARATH</name>
<feature type="transit peptide" description="Mitochondrion" evidence="2">
    <location>
        <begin position="1"/>
        <end position="42"/>
    </location>
</feature>
<feature type="chain" id="PRO_0000031070" description="DNA-directed RNA polymerase 1, mitochondrial">
    <location>
        <begin position="43"/>
        <end position="976"/>
    </location>
</feature>
<feature type="active site" evidence="1">
    <location>
        <position position="677"/>
    </location>
</feature>
<feature type="active site" evidence="1">
    <location>
        <position position="752"/>
    </location>
</feature>
<feature type="active site" evidence="1">
    <location>
        <position position="909"/>
    </location>
</feature>
<feature type="sequence conflict" description="In Ref. 1; CAA69331." evidence="6" ref="1">
    <original>E</original>
    <variation>V</variation>
    <location>
        <position position="498"/>
    </location>
</feature>
<feature type="sequence conflict" description="In Ref. 1; CAA69331." evidence="6" ref="1">
    <original>G</original>
    <variation>S</variation>
    <location>
        <position position="766"/>
    </location>
</feature>
<feature type="sequence conflict" description="In Ref. 1; CAA69331." evidence="6" ref="1">
    <original>V</original>
    <variation>I</variation>
    <location>
        <position position="920"/>
    </location>
</feature>
<feature type="sequence conflict" description="In Ref. 1; CAA69331." evidence="6" ref="1">
    <original>I</original>
    <variation>V</variation>
    <location>
        <position position="924"/>
    </location>
</feature>
<proteinExistence type="evidence at transcript level"/>
<accession>P92969</accession>
<accession>O23698</accession>
<gene>
    <name type="primary">RPOT1</name>
    <name type="synonym">RPOMT</name>
    <name type="ordered locus">At1g68990</name>
    <name type="ORF">T6L1.17</name>
</gene>
<reference key="1">
    <citation type="journal article" date="1997" name="Science">
        <title>Mitochondrial and chloroplast phage-type RNA polymerases in Arabidopsis.</title>
        <authorList>
            <person name="Hedtke B."/>
            <person name="Boerner T."/>
            <person name="Weihe A."/>
        </authorList>
    </citation>
    <scope>NUCLEOTIDE SEQUENCE [GENOMIC DNA / MRNA]</scope>
    <source>
        <strain>cv. Columbia</strain>
    </source>
</reference>
<reference key="2">
    <citation type="submission" date="1996-12" db="EMBL/GenBank/DDBJ databases">
        <authorList>
            <person name="Schuster W."/>
        </authorList>
    </citation>
    <scope>NUCLEOTIDE SEQUENCE [GENOMIC DNA]</scope>
    <source>
        <strain>cv. Columbia</strain>
    </source>
</reference>
<reference key="3">
    <citation type="journal article" date="2000" name="Nature">
        <title>Sequence and analysis of chromosome 1 of the plant Arabidopsis thaliana.</title>
        <authorList>
            <person name="Theologis A."/>
            <person name="Ecker J.R."/>
            <person name="Palm C.J."/>
            <person name="Federspiel N.A."/>
            <person name="Kaul S."/>
            <person name="White O."/>
            <person name="Alonso J."/>
            <person name="Altafi H."/>
            <person name="Araujo R."/>
            <person name="Bowman C.L."/>
            <person name="Brooks S.Y."/>
            <person name="Buehler E."/>
            <person name="Chan A."/>
            <person name="Chao Q."/>
            <person name="Chen H."/>
            <person name="Cheuk R.F."/>
            <person name="Chin C.W."/>
            <person name="Chung M.K."/>
            <person name="Conn L."/>
            <person name="Conway A.B."/>
            <person name="Conway A.R."/>
            <person name="Creasy T.H."/>
            <person name="Dewar K."/>
            <person name="Dunn P."/>
            <person name="Etgu P."/>
            <person name="Feldblyum T.V."/>
            <person name="Feng J.-D."/>
            <person name="Fong B."/>
            <person name="Fujii C.Y."/>
            <person name="Gill J.E."/>
            <person name="Goldsmith A.D."/>
            <person name="Haas B."/>
            <person name="Hansen N.F."/>
            <person name="Hughes B."/>
            <person name="Huizar L."/>
            <person name="Hunter J.L."/>
            <person name="Jenkins J."/>
            <person name="Johnson-Hopson C."/>
            <person name="Khan S."/>
            <person name="Khaykin E."/>
            <person name="Kim C.J."/>
            <person name="Koo H.L."/>
            <person name="Kremenetskaia I."/>
            <person name="Kurtz D.B."/>
            <person name="Kwan A."/>
            <person name="Lam B."/>
            <person name="Langin-Hooper S."/>
            <person name="Lee A."/>
            <person name="Lee J.M."/>
            <person name="Lenz C.A."/>
            <person name="Li J.H."/>
            <person name="Li Y.-P."/>
            <person name="Lin X."/>
            <person name="Liu S.X."/>
            <person name="Liu Z.A."/>
            <person name="Luros J.S."/>
            <person name="Maiti R."/>
            <person name="Marziali A."/>
            <person name="Militscher J."/>
            <person name="Miranda M."/>
            <person name="Nguyen M."/>
            <person name="Nierman W.C."/>
            <person name="Osborne B.I."/>
            <person name="Pai G."/>
            <person name="Peterson J."/>
            <person name="Pham P.K."/>
            <person name="Rizzo M."/>
            <person name="Rooney T."/>
            <person name="Rowley D."/>
            <person name="Sakano H."/>
            <person name="Salzberg S.L."/>
            <person name="Schwartz J.R."/>
            <person name="Shinn P."/>
            <person name="Southwick A.M."/>
            <person name="Sun H."/>
            <person name="Tallon L.J."/>
            <person name="Tambunga G."/>
            <person name="Toriumi M.J."/>
            <person name="Town C.D."/>
            <person name="Utterback T."/>
            <person name="Van Aken S."/>
            <person name="Vaysberg M."/>
            <person name="Vysotskaia V.S."/>
            <person name="Walker M."/>
            <person name="Wu D."/>
            <person name="Yu G."/>
            <person name="Fraser C.M."/>
            <person name="Venter J.C."/>
            <person name="Davis R.W."/>
        </authorList>
    </citation>
    <scope>NUCLEOTIDE SEQUENCE [LARGE SCALE GENOMIC DNA]</scope>
    <source>
        <strain>cv. Columbia</strain>
    </source>
</reference>
<reference key="4">
    <citation type="journal article" date="2017" name="Plant J.">
        <title>Araport11: a complete reannotation of the Arabidopsis thaliana reference genome.</title>
        <authorList>
            <person name="Cheng C.Y."/>
            <person name="Krishnakumar V."/>
            <person name="Chan A.P."/>
            <person name="Thibaud-Nissen F."/>
            <person name="Schobel S."/>
            <person name="Town C.D."/>
        </authorList>
    </citation>
    <scope>GENOME REANNOTATION</scope>
    <source>
        <strain>cv. Columbia</strain>
    </source>
</reference>
<reference key="5">
    <citation type="journal article" date="1999" name="Plant J.">
        <title>Green fluorescent protein as a marker to investigate targeting of organellar RNA polymerases of higher plants in vivo.</title>
        <authorList>
            <person name="Hedtke B."/>
            <person name="Meixner M."/>
            <person name="Gillandt S."/>
            <person name="Richter E."/>
            <person name="Boerner T."/>
            <person name="Weihe A."/>
        </authorList>
    </citation>
    <scope>SUBCELLULAR LOCATION</scope>
</reference>
<reference key="6">
    <citation type="journal article" date="2000" name="EMBO Rep.">
        <title>One RNA polymerase serving two genomes.</title>
        <authorList>
            <person name="Hedtke B."/>
            <person name="Boerner T."/>
            <person name="Weihe A."/>
        </authorList>
    </citation>
    <scope>GENE FAMILY</scope>
    <scope>NOMENCLATURE</scope>
</reference>
<protein>
    <recommendedName>
        <fullName>DNA-directed RNA polymerase 1, mitochondrial</fullName>
        <ecNumber>2.7.7.6</ecNumber>
    </recommendedName>
</protein>
<comment type="function">
    <text>DNA-dependent RNA polymerase catalyzes the transcription of DNA into RNA using the four ribonucleoside triphosphates as substrates.</text>
</comment>
<comment type="catalytic activity">
    <reaction evidence="3 4">
        <text>RNA(n) + a ribonucleoside 5'-triphosphate = RNA(n+1) + diphosphate</text>
        <dbReference type="Rhea" id="RHEA:21248"/>
        <dbReference type="Rhea" id="RHEA-COMP:14527"/>
        <dbReference type="Rhea" id="RHEA-COMP:17342"/>
        <dbReference type="ChEBI" id="CHEBI:33019"/>
        <dbReference type="ChEBI" id="CHEBI:61557"/>
        <dbReference type="ChEBI" id="CHEBI:140395"/>
        <dbReference type="EC" id="2.7.7.6"/>
    </reaction>
</comment>
<comment type="subcellular location">
    <subcellularLocation>
        <location evidence="5">Mitochondrion</location>
    </subcellularLocation>
</comment>
<comment type="alternative products">
    <event type="alternative splicing"/>
    <isoform>
        <id>P92969-1</id>
        <name>1</name>
        <sequence type="displayed"/>
    </isoform>
    <text>A number of isoforms are produced. According to EST sequences.</text>
</comment>
<comment type="similarity">
    <text evidence="6">Belongs to the phage and mitochondrial RNA polymerase family.</text>
</comment>
<evidence type="ECO:0000250" key="1"/>
<evidence type="ECO:0000255" key="2"/>
<evidence type="ECO:0000255" key="3">
    <source>
        <dbReference type="PROSITE-ProRule" id="PRU10031"/>
    </source>
</evidence>
<evidence type="ECO:0000255" key="4">
    <source>
        <dbReference type="PROSITE-ProRule" id="PRU10032"/>
    </source>
</evidence>
<evidence type="ECO:0000269" key="5">
    <source>
    </source>
</evidence>
<evidence type="ECO:0000305" key="6"/>